<gene>
    <name evidence="1" type="primary">hemE</name>
    <name type="ordered locus">SE_1513</name>
</gene>
<name>DCUP_STAES</name>
<evidence type="ECO:0000255" key="1">
    <source>
        <dbReference type="HAMAP-Rule" id="MF_00218"/>
    </source>
</evidence>
<evidence type="ECO:0000305" key="2"/>
<keyword id="KW-0963">Cytoplasm</keyword>
<keyword id="KW-0210">Decarboxylase</keyword>
<keyword id="KW-0456">Lyase</keyword>
<keyword id="KW-0627">Porphyrin biosynthesis</keyword>
<organism>
    <name type="scientific">Staphylococcus epidermidis (strain ATCC 12228 / FDA PCI 1200)</name>
    <dbReference type="NCBI Taxonomy" id="176280"/>
    <lineage>
        <taxon>Bacteria</taxon>
        <taxon>Bacillati</taxon>
        <taxon>Bacillota</taxon>
        <taxon>Bacilli</taxon>
        <taxon>Bacillales</taxon>
        <taxon>Staphylococcaceae</taxon>
        <taxon>Staphylococcus</taxon>
    </lineage>
</organism>
<reference key="1">
    <citation type="journal article" date="2003" name="Mol. Microbiol.">
        <title>Genome-based analysis of virulence genes in a non-biofilm-forming Staphylococcus epidermidis strain (ATCC 12228).</title>
        <authorList>
            <person name="Zhang Y.-Q."/>
            <person name="Ren S.-X."/>
            <person name="Li H.-L."/>
            <person name="Wang Y.-X."/>
            <person name="Fu G."/>
            <person name="Yang J."/>
            <person name="Qin Z.-Q."/>
            <person name="Miao Y.-G."/>
            <person name="Wang W.-Y."/>
            <person name="Chen R.-S."/>
            <person name="Shen Y."/>
            <person name="Chen Z."/>
            <person name="Yuan Z.-H."/>
            <person name="Zhao G.-P."/>
            <person name="Qu D."/>
            <person name="Danchin A."/>
            <person name="Wen Y.-M."/>
        </authorList>
    </citation>
    <scope>NUCLEOTIDE SEQUENCE [LARGE SCALE GENOMIC DNA]</scope>
    <source>
        <strain>ATCC 12228 / FDA PCI 1200</strain>
    </source>
</reference>
<accession>Q8CNS0</accession>
<comment type="function">
    <text evidence="1">Catalyzes the decarboxylation of four acetate groups of uroporphyrinogen-III to yield coproporphyrinogen-III.</text>
</comment>
<comment type="catalytic activity">
    <reaction evidence="1">
        <text>uroporphyrinogen III + 4 H(+) = coproporphyrinogen III + 4 CO2</text>
        <dbReference type="Rhea" id="RHEA:19865"/>
        <dbReference type="ChEBI" id="CHEBI:15378"/>
        <dbReference type="ChEBI" id="CHEBI:16526"/>
        <dbReference type="ChEBI" id="CHEBI:57308"/>
        <dbReference type="ChEBI" id="CHEBI:57309"/>
        <dbReference type="EC" id="4.1.1.37"/>
    </reaction>
</comment>
<comment type="pathway">
    <text evidence="1">Porphyrin-containing compound metabolism; protoporphyrin-IX biosynthesis; coproporphyrinogen-III from 5-aminolevulinate: step 4/4.</text>
</comment>
<comment type="subunit">
    <text evidence="1">Homodimer.</text>
</comment>
<comment type="subcellular location">
    <subcellularLocation>
        <location evidence="1">Cytoplasm</location>
    </subcellularLocation>
</comment>
<comment type="similarity">
    <text evidence="1">Belongs to the uroporphyrinogen decarboxylase family.</text>
</comment>
<comment type="sequence caution" evidence="2">
    <conflict type="erroneous initiation">
        <sequence resource="EMBL-CDS" id="AAO05112"/>
    </conflict>
</comment>
<protein>
    <recommendedName>
        <fullName evidence="1">Uroporphyrinogen decarboxylase</fullName>
        <shortName evidence="1">UPD</shortName>
        <shortName evidence="1">URO-D</shortName>
        <ecNumber evidence="1">4.1.1.37</ecNumber>
    </recommendedName>
</protein>
<sequence length="353" mass="40079">MIQLWGDSRLRSKNDTILKAIKGESTSHTPVWFMRQAGRSQPEYRKLKEKYSLFEITHQPELCAYVTHLPVDNYQTDAAVLYKDIMTPLKPIGVDVEIKSGIGPVISNPIQTVKDVERLSQIDPKRDVPYVLDTIKLLTEEKLNVPLIGFTGAPFTLASYMIEGGPSKNYNFTKAMMYRDEETWFALMNHLVDISIDYVVAQVEAGAEIIQIFDSWVGALNVKDYRYYIKPAMNKLISGIKAYYDVPIILFGVGASHLINEWNDLPIDVLGLDWRTTIKQADKMGVNKAIQGNLDPSILLAPWDVIESRLKDILNQGLNRGKYIFNLGHGVFPEVKPETLRKVTEFVHNYTAK</sequence>
<proteinExistence type="inferred from homology"/>
<feature type="chain" id="PRO_0000187645" description="Uroporphyrinogen decarboxylase">
    <location>
        <begin position="1"/>
        <end position="353"/>
    </location>
</feature>
<feature type="binding site" evidence="1">
    <location>
        <begin position="35"/>
        <end position="39"/>
    </location>
    <ligand>
        <name>substrate</name>
    </ligand>
</feature>
<feature type="binding site" evidence="1">
    <location>
        <position position="54"/>
    </location>
    <ligand>
        <name>substrate</name>
    </ligand>
</feature>
<feature type="binding site" evidence="1">
    <location>
        <position position="84"/>
    </location>
    <ligand>
        <name>substrate</name>
    </ligand>
</feature>
<feature type="binding site" evidence="1">
    <location>
        <position position="160"/>
    </location>
    <ligand>
        <name>substrate</name>
    </ligand>
</feature>
<feature type="binding site" evidence="1">
    <location>
        <position position="215"/>
    </location>
    <ligand>
        <name>substrate</name>
    </ligand>
</feature>
<feature type="binding site" evidence="1">
    <location>
        <position position="329"/>
    </location>
    <ligand>
        <name>substrate</name>
    </ligand>
</feature>
<feature type="site" description="Transition state stabilizer" evidence="1">
    <location>
        <position position="84"/>
    </location>
</feature>
<dbReference type="EC" id="4.1.1.37" evidence="1"/>
<dbReference type="EMBL" id="AE015929">
    <property type="protein sequence ID" value="AAO05112.1"/>
    <property type="status" value="ALT_INIT"/>
    <property type="molecule type" value="Genomic_DNA"/>
</dbReference>
<dbReference type="RefSeq" id="NP_765068.1">
    <property type="nucleotide sequence ID" value="NC_004461.1"/>
</dbReference>
<dbReference type="RefSeq" id="WP_164924954.1">
    <property type="nucleotide sequence ID" value="NC_004461.1"/>
</dbReference>
<dbReference type="SMR" id="Q8CNS0"/>
<dbReference type="KEGG" id="sep:SE_1513"/>
<dbReference type="PATRIC" id="fig|176280.10.peg.1477"/>
<dbReference type="eggNOG" id="COG0407">
    <property type="taxonomic scope" value="Bacteria"/>
</dbReference>
<dbReference type="HOGENOM" id="CLU_040933_0_1_9"/>
<dbReference type="OrthoDB" id="9806656at2"/>
<dbReference type="UniPathway" id="UPA00251">
    <property type="reaction ID" value="UER00321"/>
</dbReference>
<dbReference type="Proteomes" id="UP000001411">
    <property type="component" value="Chromosome"/>
</dbReference>
<dbReference type="GO" id="GO:0005829">
    <property type="term" value="C:cytosol"/>
    <property type="evidence" value="ECO:0007669"/>
    <property type="project" value="TreeGrafter"/>
</dbReference>
<dbReference type="GO" id="GO:0004853">
    <property type="term" value="F:uroporphyrinogen decarboxylase activity"/>
    <property type="evidence" value="ECO:0007669"/>
    <property type="project" value="UniProtKB-UniRule"/>
</dbReference>
<dbReference type="GO" id="GO:0006782">
    <property type="term" value="P:protoporphyrinogen IX biosynthetic process"/>
    <property type="evidence" value="ECO:0007669"/>
    <property type="project" value="UniProtKB-UniRule"/>
</dbReference>
<dbReference type="CDD" id="cd00717">
    <property type="entry name" value="URO-D"/>
    <property type="match status" value="1"/>
</dbReference>
<dbReference type="FunFam" id="3.20.20.210:FF:000005">
    <property type="entry name" value="Uroporphyrinogen decarboxylase"/>
    <property type="match status" value="1"/>
</dbReference>
<dbReference type="Gene3D" id="3.20.20.210">
    <property type="match status" value="1"/>
</dbReference>
<dbReference type="HAMAP" id="MF_00218">
    <property type="entry name" value="URO_D"/>
    <property type="match status" value="1"/>
</dbReference>
<dbReference type="InterPro" id="IPR038071">
    <property type="entry name" value="UROD/MetE-like_sf"/>
</dbReference>
<dbReference type="InterPro" id="IPR006361">
    <property type="entry name" value="Uroporphyrinogen_deCO2ase_HemE"/>
</dbReference>
<dbReference type="InterPro" id="IPR000257">
    <property type="entry name" value="Uroporphyrinogen_deCOase"/>
</dbReference>
<dbReference type="NCBIfam" id="TIGR01464">
    <property type="entry name" value="hemE"/>
    <property type="match status" value="1"/>
</dbReference>
<dbReference type="PANTHER" id="PTHR21091">
    <property type="entry name" value="METHYLTETRAHYDROFOLATE:HOMOCYSTEINE METHYLTRANSFERASE RELATED"/>
    <property type="match status" value="1"/>
</dbReference>
<dbReference type="PANTHER" id="PTHR21091:SF169">
    <property type="entry name" value="UROPORPHYRINOGEN DECARBOXYLASE"/>
    <property type="match status" value="1"/>
</dbReference>
<dbReference type="Pfam" id="PF01208">
    <property type="entry name" value="URO-D"/>
    <property type="match status" value="1"/>
</dbReference>
<dbReference type="SUPFAM" id="SSF51726">
    <property type="entry name" value="UROD/MetE-like"/>
    <property type="match status" value="1"/>
</dbReference>
<dbReference type="PROSITE" id="PS00906">
    <property type="entry name" value="UROD_1"/>
    <property type="match status" value="1"/>
</dbReference>
<dbReference type="PROSITE" id="PS00907">
    <property type="entry name" value="UROD_2"/>
    <property type="match status" value="1"/>
</dbReference>